<evidence type="ECO:0000255" key="1"/>
<evidence type="ECO:0000305" key="2"/>
<dbReference type="EMBL" id="AC024174">
    <property type="protein sequence ID" value="AAF80137.1"/>
    <property type="molecule type" value="Genomic_DNA"/>
</dbReference>
<dbReference type="EMBL" id="CP002684">
    <property type="protein sequence ID" value="AEE27946.1"/>
    <property type="molecule type" value="Genomic_DNA"/>
</dbReference>
<dbReference type="PIR" id="G86196">
    <property type="entry name" value="G86196"/>
</dbReference>
<dbReference type="SMR" id="Q9LND4"/>
<dbReference type="FunCoup" id="Q9LND4">
    <property type="interactions" value="1"/>
</dbReference>
<dbReference type="STRING" id="3702.Q9LND4"/>
<dbReference type="PaxDb" id="3702-AT1G06140.1"/>
<dbReference type="EnsemblPlants" id="AT1G06140.1">
    <property type="protein sequence ID" value="AT1G06140.1"/>
    <property type="gene ID" value="AT1G06140"/>
</dbReference>
<dbReference type="GeneID" id="837123"/>
<dbReference type="Gramene" id="AT1G06140.1">
    <property type="protein sequence ID" value="AT1G06140.1"/>
    <property type="gene ID" value="AT1G06140"/>
</dbReference>
<dbReference type="KEGG" id="ath:AT1G06140"/>
<dbReference type="Araport" id="AT1G06140"/>
<dbReference type="TAIR" id="AT1G06140">
    <property type="gene designation" value="MEF3"/>
</dbReference>
<dbReference type="eggNOG" id="KOG4197">
    <property type="taxonomic scope" value="Eukaryota"/>
</dbReference>
<dbReference type="HOGENOM" id="CLU_002706_0_1_1"/>
<dbReference type="InParanoid" id="Q9LND4"/>
<dbReference type="OMA" id="MGIKGYR"/>
<dbReference type="PhylomeDB" id="Q9LND4"/>
<dbReference type="PRO" id="PR:Q9LND4"/>
<dbReference type="Proteomes" id="UP000006548">
    <property type="component" value="Chromosome 1"/>
</dbReference>
<dbReference type="ExpressionAtlas" id="Q9LND4">
    <property type="expression patterns" value="baseline and differential"/>
</dbReference>
<dbReference type="GO" id="GO:0005739">
    <property type="term" value="C:mitochondrion"/>
    <property type="evidence" value="ECO:0007669"/>
    <property type="project" value="UniProtKB-SubCell"/>
</dbReference>
<dbReference type="GO" id="GO:0003723">
    <property type="term" value="F:RNA binding"/>
    <property type="evidence" value="ECO:0007669"/>
    <property type="project" value="InterPro"/>
</dbReference>
<dbReference type="GO" id="GO:0080156">
    <property type="term" value="P:mitochondrial mRNA modification"/>
    <property type="evidence" value="ECO:0000315"/>
    <property type="project" value="TAIR"/>
</dbReference>
<dbReference type="FunFam" id="1.25.40.10:FF:001818">
    <property type="entry name" value="Pentatricopeptide repeat-containing protein At1g06140, mitochondrial"/>
    <property type="match status" value="1"/>
</dbReference>
<dbReference type="FunFam" id="1.25.40.10:FF:001969">
    <property type="entry name" value="Pentatricopeptide repeat-containing protein At1g06140, mitochondrial"/>
    <property type="match status" value="1"/>
</dbReference>
<dbReference type="FunFam" id="1.25.40.10:FF:000090">
    <property type="entry name" value="Pentatricopeptide repeat-containing protein, chloroplastic"/>
    <property type="match status" value="1"/>
</dbReference>
<dbReference type="Gene3D" id="1.25.40.10">
    <property type="entry name" value="Tetratricopeptide repeat domain"/>
    <property type="match status" value="5"/>
</dbReference>
<dbReference type="InterPro" id="IPR046848">
    <property type="entry name" value="E_motif"/>
</dbReference>
<dbReference type="InterPro" id="IPR002885">
    <property type="entry name" value="Pentatricopeptide_rpt"/>
</dbReference>
<dbReference type="InterPro" id="IPR046960">
    <property type="entry name" value="PPR_At4g14850-like_plant"/>
</dbReference>
<dbReference type="InterPro" id="IPR011990">
    <property type="entry name" value="TPR-like_helical_dom_sf"/>
</dbReference>
<dbReference type="NCBIfam" id="TIGR00756">
    <property type="entry name" value="PPR"/>
    <property type="match status" value="3"/>
</dbReference>
<dbReference type="PANTHER" id="PTHR47926">
    <property type="entry name" value="PENTATRICOPEPTIDE REPEAT-CONTAINING PROTEIN"/>
    <property type="match status" value="1"/>
</dbReference>
<dbReference type="PANTHER" id="PTHR47926:SF347">
    <property type="entry name" value="PENTATRICOPEPTIDE REPEAT-CONTAINING PROTEIN"/>
    <property type="match status" value="1"/>
</dbReference>
<dbReference type="Pfam" id="PF20431">
    <property type="entry name" value="E_motif"/>
    <property type="match status" value="1"/>
</dbReference>
<dbReference type="Pfam" id="PF01535">
    <property type="entry name" value="PPR"/>
    <property type="match status" value="3"/>
</dbReference>
<dbReference type="Pfam" id="PF13041">
    <property type="entry name" value="PPR_2"/>
    <property type="match status" value="2"/>
</dbReference>
<dbReference type="PROSITE" id="PS51375">
    <property type="entry name" value="PPR"/>
    <property type="match status" value="11"/>
</dbReference>
<accession>Q9LND4</accession>
<comment type="subcellular location">
    <subcellularLocation>
        <location evidence="2">Mitochondrion</location>
    </subcellularLocation>
</comment>
<comment type="similarity">
    <text evidence="2">Belongs to the PPR family. PCMP-E subfamily.</text>
</comment>
<comment type="online information" name="Pentatricopeptide repeat proteins">
    <link uri="https://ppr.plantenergy.uwa.edu.au"/>
</comment>
<sequence>MLPVNRARALLTILSQAKTLNHTQQVHAKVIIHGFEDEVVLGSSLTNAYIQSNRLDFATSSFNRIPCWKRNRHSWNTILSGYSKSKTCCYSDVLLLYNRMRRHCDGVDSFNLVFAIKACVGLGLLENGILIHGLAMKNGLDKDDYVAPSLVEMYAQLGTMESAQKVFDEIPVRNSVLWGVLMKGYLKYSKDPEVFRLFCLMRDTGLALDALTLICLVKACGNVFAGKVGKCVHGVSIRRSFIDQSDYLQASIIDMYVKCRLLDNARKLFETSVDRNVVMWTTLISGFAKCERAVEAFDLFRQMLRESILPNQCTLAAILVSCSSLGSLRHGKSVHGYMIRNGIEMDAVNFTSFIDMYARCGNIQMARTVFDMMPERNVISWSSMINAFGINGLFEEALDCFHKMKSQNVVPNSVTFVSLLSACSHSGNVKEGWKQFESMTRDYGVVPEEEHYACMVDLLGRAGEIGEAKSFIDNMPVKPMASAWGALLSACRIHKEVDLAGEIAEKLLSMEPEKSSVYVLLSNIYADAGMWEMVNCVRRKMGIKGYRKHVGQSATEVG</sequence>
<gene>
    <name type="primary">PCMP-E61</name>
    <name type="ordered locus">At1g06140</name>
    <name type="ORF">T21E18.19</name>
</gene>
<protein>
    <recommendedName>
        <fullName>Pentatricopeptide repeat-containing protein At1g06140, mitochondrial</fullName>
    </recommendedName>
</protein>
<proteinExistence type="evidence at transcript level"/>
<feature type="transit peptide" description="Mitochondrion" evidence="1">
    <location>
        <begin position="1"/>
        <end position="79"/>
    </location>
</feature>
<feature type="chain" id="PRO_0000342755" description="Pentatricopeptide repeat-containing protein At1g06140, mitochondrial">
    <location>
        <begin position="80"/>
        <end position="558"/>
    </location>
</feature>
<feature type="repeat" description="PPR 1">
    <location>
        <begin position="38"/>
        <end position="68"/>
    </location>
</feature>
<feature type="repeat" description="PPR 2">
    <location>
        <begin position="71"/>
        <end position="103"/>
    </location>
</feature>
<feature type="repeat" description="PPR 3">
    <location>
        <begin position="108"/>
        <end position="142"/>
    </location>
</feature>
<feature type="repeat" description="PPR 4">
    <location>
        <begin position="143"/>
        <end position="173"/>
    </location>
</feature>
<feature type="repeat" description="PPR 5">
    <location>
        <begin position="174"/>
        <end position="208"/>
    </location>
</feature>
<feature type="repeat" description="PPR 6">
    <location>
        <begin position="209"/>
        <end position="243"/>
    </location>
</feature>
<feature type="repeat" description="PPR 7">
    <location>
        <begin position="245"/>
        <end position="275"/>
    </location>
</feature>
<feature type="repeat" description="PPR 8">
    <location>
        <begin position="276"/>
        <end position="310"/>
    </location>
</feature>
<feature type="repeat" description="PPR 9">
    <location>
        <begin position="311"/>
        <end position="345"/>
    </location>
</feature>
<feature type="repeat" description="PPR 10">
    <location>
        <begin position="346"/>
        <end position="376"/>
    </location>
</feature>
<feature type="repeat" description="PPR 11">
    <location>
        <begin position="377"/>
        <end position="411"/>
    </location>
</feature>
<feature type="repeat" description="PPR 12">
    <location>
        <begin position="412"/>
        <end position="447"/>
    </location>
</feature>
<feature type="repeat" description="PPR 13">
    <location>
        <begin position="448"/>
        <end position="482"/>
    </location>
</feature>
<feature type="region of interest" description="Type E motif">
    <location>
        <begin position="483"/>
        <end position="558"/>
    </location>
</feature>
<name>PPR14_ARATH</name>
<reference key="1">
    <citation type="journal article" date="2000" name="Nature">
        <title>Sequence and analysis of chromosome 1 of the plant Arabidopsis thaliana.</title>
        <authorList>
            <person name="Theologis A."/>
            <person name="Ecker J.R."/>
            <person name="Palm C.J."/>
            <person name="Federspiel N.A."/>
            <person name="Kaul S."/>
            <person name="White O."/>
            <person name="Alonso J."/>
            <person name="Altafi H."/>
            <person name="Araujo R."/>
            <person name="Bowman C.L."/>
            <person name="Brooks S.Y."/>
            <person name="Buehler E."/>
            <person name="Chan A."/>
            <person name="Chao Q."/>
            <person name="Chen H."/>
            <person name="Cheuk R.F."/>
            <person name="Chin C.W."/>
            <person name="Chung M.K."/>
            <person name="Conn L."/>
            <person name="Conway A.B."/>
            <person name="Conway A.R."/>
            <person name="Creasy T.H."/>
            <person name="Dewar K."/>
            <person name="Dunn P."/>
            <person name="Etgu P."/>
            <person name="Feldblyum T.V."/>
            <person name="Feng J.-D."/>
            <person name="Fong B."/>
            <person name="Fujii C.Y."/>
            <person name="Gill J.E."/>
            <person name="Goldsmith A.D."/>
            <person name="Haas B."/>
            <person name="Hansen N.F."/>
            <person name="Hughes B."/>
            <person name="Huizar L."/>
            <person name="Hunter J.L."/>
            <person name="Jenkins J."/>
            <person name="Johnson-Hopson C."/>
            <person name="Khan S."/>
            <person name="Khaykin E."/>
            <person name="Kim C.J."/>
            <person name="Koo H.L."/>
            <person name="Kremenetskaia I."/>
            <person name="Kurtz D.B."/>
            <person name="Kwan A."/>
            <person name="Lam B."/>
            <person name="Langin-Hooper S."/>
            <person name="Lee A."/>
            <person name="Lee J.M."/>
            <person name="Lenz C.A."/>
            <person name="Li J.H."/>
            <person name="Li Y.-P."/>
            <person name="Lin X."/>
            <person name="Liu S.X."/>
            <person name="Liu Z.A."/>
            <person name="Luros J.S."/>
            <person name="Maiti R."/>
            <person name="Marziali A."/>
            <person name="Militscher J."/>
            <person name="Miranda M."/>
            <person name="Nguyen M."/>
            <person name="Nierman W.C."/>
            <person name="Osborne B.I."/>
            <person name="Pai G."/>
            <person name="Peterson J."/>
            <person name="Pham P.K."/>
            <person name="Rizzo M."/>
            <person name="Rooney T."/>
            <person name="Rowley D."/>
            <person name="Sakano H."/>
            <person name="Salzberg S.L."/>
            <person name="Schwartz J.R."/>
            <person name="Shinn P."/>
            <person name="Southwick A.M."/>
            <person name="Sun H."/>
            <person name="Tallon L.J."/>
            <person name="Tambunga G."/>
            <person name="Toriumi M.J."/>
            <person name="Town C.D."/>
            <person name="Utterback T."/>
            <person name="Van Aken S."/>
            <person name="Vaysberg M."/>
            <person name="Vysotskaia V.S."/>
            <person name="Walker M."/>
            <person name="Wu D."/>
            <person name="Yu G."/>
            <person name="Fraser C.M."/>
            <person name="Venter J.C."/>
            <person name="Davis R.W."/>
        </authorList>
    </citation>
    <scope>NUCLEOTIDE SEQUENCE [LARGE SCALE GENOMIC DNA]</scope>
    <source>
        <strain>cv. Columbia</strain>
    </source>
</reference>
<reference key="2">
    <citation type="journal article" date="2017" name="Plant J.">
        <title>Araport11: a complete reannotation of the Arabidopsis thaliana reference genome.</title>
        <authorList>
            <person name="Cheng C.Y."/>
            <person name="Krishnakumar V."/>
            <person name="Chan A.P."/>
            <person name="Thibaud-Nissen F."/>
            <person name="Schobel S."/>
            <person name="Town C.D."/>
        </authorList>
    </citation>
    <scope>GENOME REANNOTATION</scope>
    <source>
        <strain>cv. Columbia</strain>
    </source>
</reference>
<reference key="3">
    <citation type="journal article" date="2004" name="Plant Cell">
        <title>Genome-wide analysis of Arabidopsis pentatricopeptide repeat proteins reveals their essential role in organelle biogenesis.</title>
        <authorList>
            <person name="Lurin C."/>
            <person name="Andres C."/>
            <person name="Aubourg S."/>
            <person name="Bellaoui M."/>
            <person name="Bitton F."/>
            <person name="Bruyere C."/>
            <person name="Caboche M."/>
            <person name="Debast C."/>
            <person name="Gualberto J."/>
            <person name="Hoffmann B."/>
            <person name="Lecharny A."/>
            <person name="Le Ret M."/>
            <person name="Martin-Magniette M.-L."/>
            <person name="Mireau H."/>
            <person name="Peeters N."/>
            <person name="Renou J.-P."/>
            <person name="Szurek B."/>
            <person name="Taconnat L."/>
            <person name="Small I."/>
        </authorList>
    </citation>
    <scope>GENE FAMILY</scope>
</reference>
<keyword id="KW-0496">Mitochondrion</keyword>
<keyword id="KW-1185">Reference proteome</keyword>
<keyword id="KW-0677">Repeat</keyword>
<keyword id="KW-0809">Transit peptide</keyword>
<organism>
    <name type="scientific">Arabidopsis thaliana</name>
    <name type="common">Mouse-ear cress</name>
    <dbReference type="NCBI Taxonomy" id="3702"/>
    <lineage>
        <taxon>Eukaryota</taxon>
        <taxon>Viridiplantae</taxon>
        <taxon>Streptophyta</taxon>
        <taxon>Embryophyta</taxon>
        <taxon>Tracheophyta</taxon>
        <taxon>Spermatophyta</taxon>
        <taxon>Magnoliopsida</taxon>
        <taxon>eudicotyledons</taxon>
        <taxon>Gunneridae</taxon>
        <taxon>Pentapetalae</taxon>
        <taxon>rosids</taxon>
        <taxon>malvids</taxon>
        <taxon>Brassicales</taxon>
        <taxon>Brassicaceae</taxon>
        <taxon>Camelineae</taxon>
        <taxon>Arabidopsis</taxon>
    </lineage>
</organism>